<evidence type="ECO:0000255" key="1">
    <source>
        <dbReference type="HAMAP-Rule" id="MF_00412"/>
    </source>
</evidence>
<comment type="function">
    <text evidence="1">Catalyzes the NADPH-dependent reduction of L-glutamate 5-phosphate into L-glutamate 5-semialdehyde and phosphate. The product spontaneously undergoes cyclization to form 1-pyrroline-5-carboxylate.</text>
</comment>
<comment type="catalytic activity">
    <reaction evidence="1">
        <text>L-glutamate 5-semialdehyde + phosphate + NADP(+) = L-glutamyl 5-phosphate + NADPH + H(+)</text>
        <dbReference type="Rhea" id="RHEA:19541"/>
        <dbReference type="ChEBI" id="CHEBI:15378"/>
        <dbReference type="ChEBI" id="CHEBI:43474"/>
        <dbReference type="ChEBI" id="CHEBI:57783"/>
        <dbReference type="ChEBI" id="CHEBI:58066"/>
        <dbReference type="ChEBI" id="CHEBI:58274"/>
        <dbReference type="ChEBI" id="CHEBI:58349"/>
        <dbReference type="EC" id="1.2.1.41"/>
    </reaction>
</comment>
<comment type="pathway">
    <text evidence="1">Amino-acid biosynthesis; L-proline biosynthesis; L-glutamate 5-semialdehyde from L-glutamate: step 2/2.</text>
</comment>
<comment type="subcellular location">
    <subcellularLocation>
        <location evidence="1">Cytoplasm</location>
    </subcellularLocation>
</comment>
<comment type="similarity">
    <text evidence="1">Belongs to the gamma-glutamyl phosphate reductase family.</text>
</comment>
<dbReference type="EC" id="1.2.1.41" evidence="1"/>
<dbReference type="EMBL" id="CP000514">
    <property type="protein sequence ID" value="ABM19492.1"/>
    <property type="molecule type" value="Genomic_DNA"/>
</dbReference>
<dbReference type="RefSeq" id="WP_011785876.1">
    <property type="nucleotide sequence ID" value="NC_008740.1"/>
</dbReference>
<dbReference type="SMR" id="A1U3C3"/>
<dbReference type="STRING" id="351348.Maqu_2417"/>
<dbReference type="KEGG" id="maq:Maqu_2417"/>
<dbReference type="eggNOG" id="COG0014">
    <property type="taxonomic scope" value="Bacteria"/>
</dbReference>
<dbReference type="HOGENOM" id="CLU_030231_0_0_6"/>
<dbReference type="OrthoDB" id="9809970at2"/>
<dbReference type="UniPathway" id="UPA00098">
    <property type="reaction ID" value="UER00360"/>
</dbReference>
<dbReference type="Proteomes" id="UP000000998">
    <property type="component" value="Chromosome"/>
</dbReference>
<dbReference type="GO" id="GO:0005737">
    <property type="term" value="C:cytoplasm"/>
    <property type="evidence" value="ECO:0007669"/>
    <property type="project" value="UniProtKB-SubCell"/>
</dbReference>
<dbReference type="GO" id="GO:0004350">
    <property type="term" value="F:glutamate-5-semialdehyde dehydrogenase activity"/>
    <property type="evidence" value="ECO:0007669"/>
    <property type="project" value="UniProtKB-UniRule"/>
</dbReference>
<dbReference type="GO" id="GO:0050661">
    <property type="term" value="F:NADP binding"/>
    <property type="evidence" value="ECO:0007669"/>
    <property type="project" value="InterPro"/>
</dbReference>
<dbReference type="GO" id="GO:0055129">
    <property type="term" value="P:L-proline biosynthetic process"/>
    <property type="evidence" value="ECO:0007669"/>
    <property type="project" value="UniProtKB-UniRule"/>
</dbReference>
<dbReference type="CDD" id="cd07079">
    <property type="entry name" value="ALDH_F18-19_ProA-GPR"/>
    <property type="match status" value="1"/>
</dbReference>
<dbReference type="FunFam" id="3.40.309.10:FF:000006">
    <property type="entry name" value="Gamma-glutamyl phosphate reductase"/>
    <property type="match status" value="1"/>
</dbReference>
<dbReference type="Gene3D" id="3.40.605.10">
    <property type="entry name" value="Aldehyde Dehydrogenase, Chain A, domain 1"/>
    <property type="match status" value="1"/>
</dbReference>
<dbReference type="Gene3D" id="3.40.309.10">
    <property type="entry name" value="Aldehyde Dehydrogenase, Chain A, domain 2"/>
    <property type="match status" value="1"/>
</dbReference>
<dbReference type="HAMAP" id="MF_00412">
    <property type="entry name" value="ProA"/>
    <property type="match status" value="1"/>
</dbReference>
<dbReference type="InterPro" id="IPR016161">
    <property type="entry name" value="Ald_DH/histidinol_DH"/>
</dbReference>
<dbReference type="InterPro" id="IPR016163">
    <property type="entry name" value="Ald_DH_C"/>
</dbReference>
<dbReference type="InterPro" id="IPR016162">
    <property type="entry name" value="Ald_DH_N"/>
</dbReference>
<dbReference type="InterPro" id="IPR015590">
    <property type="entry name" value="Aldehyde_DH_dom"/>
</dbReference>
<dbReference type="InterPro" id="IPR020593">
    <property type="entry name" value="G-glutamylP_reductase_CS"/>
</dbReference>
<dbReference type="InterPro" id="IPR012134">
    <property type="entry name" value="Glu-5-SA_DH"/>
</dbReference>
<dbReference type="InterPro" id="IPR000965">
    <property type="entry name" value="GPR_dom"/>
</dbReference>
<dbReference type="NCBIfam" id="NF001221">
    <property type="entry name" value="PRK00197.1"/>
    <property type="match status" value="1"/>
</dbReference>
<dbReference type="NCBIfam" id="TIGR00407">
    <property type="entry name" value="proA"/>
    <property type="match status" value="1"/>
</dbReference>
<dbReference type="PANTHER" id="PTHR11063:SF8">
    <property type="entry name" value="DELTA-1-PYRROLINE-5-CARBOXYLATE SYNTHASE"/>
    <property type="match status" value="1"/>
</dbReference>
<dbReference type="PANTHER" id="PTHR11063">
    <property type="entry name" value="GLUTAMATE SEMIALDEHYDE DEHYDROGENASE"/>
    <property type="match status" value="1"/>
</dbReference>
<dbReference type="Pfam" id="PF00171">
    <property type="entry name" value="Aldedh"/>
    <property type="match status" value="2"/>
</dbReference>
<dbReference type="PIRSF" id="PIRSF000151">
    <property type="entry name" value="GPR"/>
    <property type="match status" value="1"/>
</dbReference>
<dbReference type="SUPFAM" id="SSF53720">
    <property type="entry name" value="ALDH-like"/>
    <property type="match status" value="1"/>
</dbReference>
<dbReference type="PROSITE" id="PS01223">
    <property type="entry name" value="PROA"/>
    <property type="match status" value="1"/>
</dbReference>
<feature type="chain" id="PRO_1000049962" description="Gamma-glutamyl phosphate reductase">
    <location>
        <begin position="1"/>
        <end position="418"/>
    </location>
</feature>
<name>PROA_MARN8</name>
<keyword id="KW-0028">Amino-acid biosynthesis</keyword>
<keyword id="KW-0963">Cytoplasm</keyword>
<keyword id="KW-0521">NADP</keyword>
<keyword id="KW-0560">Oxidoreductase</keyword>
<keyword id="KW-0641">Proline biosynthesis</keyword>
<organism>
    <name type="scientific">Marinobacter nauticus (strain ATCC 700491 / DSM 11845 / VT8)</name>
    <name type="common">Marinobacter aquaeolei</name>
    <dbReference type="NCBI Taxonomy" id="351348"/>
    <lineage>
        <taxon>Bacteria</taxon>
        <taxon>Pseudomonadati</taxon>
        <taxon>Pseudomonadota</taxon>
        <taxon>Gammaproteobacteria</taxon>
        <taxon>Pseudomonadales</taxon>
        <taxon>Marinobacteraceae</taxon>
        <taxon>Marinobacter</taxon>
    </lineage>
</organism>
<accession>A1U3C3</accession>
<gene>
    <name evidence="1" type="primary">proA</name>
    <name type="ordered locus">Maqu_2417</name>
</gene>
<protein>
    <recommendedName>
        <fullName evidence="1">Gamma-glutamyl phosphate reductase</fullName>
        <shortName evidence="1">GPR</shortName>
        <ecNumber evidence="1">1.2.1.41</ecNumber>
    </recommendedName>
    <alternativeName>
        <fullName evidence="1">Glutamate-5-semialdehyde dehydrogenase</fullName>
    </alternativeName>
    <alternativeName>
        <fullName evidence="1">Glutamyl-gamma-semialdehyde dehydrogenase</fullName>
        <shortName evidence="1">GSA dehydrogenase</shortName>
    </alternativeName>
</protein>
<reference key="1">
    <citation type="journal article" date="2011" name="Appl. Environ. Microbiol.">
        <title>Genomic potential of Marinobacter aquaeolei, a biogeochemical 'opportunitroph'.</title>
        <authorList>
            <person name="Singer E."/>
            <person name="Webb E.A."/>
            <person name="Nelson W.C."/>
            <person name="Heidelberg J.F."/>
            <person name="Ivanova N."/>
            <person name="Pati A."/>
            <person name="Edwards K.J."/>
        </authorList>
    </citation>
    <scope>NUCLEOTIDE SEQUENCE [LARGE SCALE GENOMIC DNA]</scope>
    <source>
        <strain>ATCC 700491 / DSM 11845 / VT8</strain>
    </source>
</reference>
<sequence length="418" mass="45094">MDVAAYMTELGQQARAASREVARSSTAVRNQALLATAAALDAARSELATANSKDLERGRENGLDSAMLDRLELTSQRIDAMIEGLRQVAALPDPVGVITDMTYRPSGIQVGKMRVPLGVIGIIYESRPNVTVEAASLCLKSGNATILRGGSEAIHSNQAIARCLKQGLSEAGLPETAVQVVSTTDRAAVGELITMPQFVDVIVPRGGKGLIERISRDARVPVIKHLDGVCHVYIDSHADPEKALKVAVNAKTQRYGTCNTMETLLVDDEVAEDLLPLLAEQFRSKTVELRGCRRTCAILGDIVEATEEDWHAEYLAPILAVKVVDGLDGAIEHINRYSSQHTDSIITENYTRARRFLTEVDSSSVMVNASTRFADGFEYGLGAEIGISTDKIHARGPVGLEGLTSQKYVVFGDGHIRT</sequence>
<proteinExistence type="inferred from homology"/>